<gene>
    <name type="ordered locus">Os09g0505700</name>
    <name type="ordered locus">LOC_Os09g32810</name>
</gene>
<sequence>MAAAAAAKIAPSMLSSDFANLAAEADRMVRLGADWLHMDIMDGHFVPNLTIGAPVIQSLRKHTKAYLDCHLMVTNPSDYVEPLAKAGASGFTFHIEVSRDNWQELIQSIKAKGMRPGVSLRPGTPVEEVFPLVEAENPVELVLVMTVEPGFGGQKFMPEMMEKVRALRKKYPSLDIEVDGGLGPSTIDVAASAGANCIVAGSSIFGAAEPGEVISALRKSVEGSQNKS</sequence>
<organism>
    <name type="scientific">Oryza sativa subsp. japonica</name>
    <name type="common">Rice</name>
    <dbReference type="NCBI Taxonomy" id="39947"/>
    <lineage>
        <taxon>Eukaryota</taxon>
        <taxon>Viridiplantae</taxon>
        <taxon>Streptophyta</taxon>
        <taxon>Embryophyta</taxon>
        <taxon>Tracheophyta</taxon>
        <taxon>Spermatophyta</taxon>
        <taxon>Magnoliopsida</taxon>
        <taxon>Liliopsida</taxon>
        <taxon>Poales</taxon>
        <taxon>Poaceae</taxon>
        <taxon>BOP clade</taxon>
        <taxon>Oryzoideae</taxon>
        <taxon>Oryzeae</taxon>
        <taxon>Oryzinae</taxon>
        <taxon>Oryza</taxon>
        <taxon>Oryza sativa</taxon>
    </lineage>
</organism>
<comment type="function">
    <text evidence="2">Catalyzes the reversible epimerization of D-ribulose 5-phosphate to D-xylulose 5-phosphate.</text>
</comment>
<comment type="catalytic activity">
    <reaction evidence="2">
        <text>D-ribulose 5-phosphate = D-xylulose 5-phosphate</text>
        <dbReference type="Rhea" id="RHEA:13677"/>
        <dbReference type="ChEBI" id="CHEBI:57737"/>
        <dbReference type="ChEBI" id="CHEBI:58121"/>
        <dbReference type="EC" id="5.1.3.1"/>
    </reaction>
</comment>
<comment type="cofactor">
    <cofactor evidence="2">
        <name>Co(2+)</name>
        <dbReference type="ChEBI" id="CHEBI:48828"/>
    </cofactor>
    <cofactor evidence="2">
        <name>Fe(2+)</name>
        <dbReference type="ChEBI" id="CHEBI:29033"/>
    </cofactor>
    <cofactor evidence="2">
        <name>Mn(2+)</name>
        <dbReference type="ChEBI" id="CHEBI:29035"/>
    </cofactor>
    <cofactor evidence="4">
        <name>Zn(2+)</name>
        <dbReference type="ChEBI" id="CHEBI:29105"/>
    </cofactor>
    <text evidence="4">Binds 1 divalent metal cation per subunit. Active with Co(2+), Fe(2+), Mn(2+) and Zn(2+).</text>
</comment>
<comment type="biophysicochemical properties">
    <kinetics>
        <Vmax evidence="3">16000.0 umol/min/mg enzyme</Vmax>
    </kinetics>
</comment>
<comment type="pathway">
    <text>Carbohydrate degradation; pentose phosphate pathway; D-xylulose 5-phosphate from D-ribulose 5-phosphate (non-oxidative stage): step 1/1.</text>
</comment>
<comment type="subunit">
    <text evidence="3 4">Homodimer.</text>
</comment>
<comment type="subcellular location">
    <subcellularLocation>
        <location evidence="3">Cytoplasm</location>
    </subcellularLocation>
</comment>
<comment type="tissue specificity">
    <text evidence="3">Predominantly accumulates in roots and seedlings.</text>
</comment>
<comment type="similarity">
    <text evidence="5">Belongs to the ribulose-phosphate 3-epimerase family.</text>
</comment>
<feature type="chain" id="PRO_0000171590" description="Ribulose-phosphate 3-epimerase, cytoplasmic isoform">
    <location>
        <begin position="1"/>
        <end position="228"/>
    </location>
</feature>
<feature type="active site" description="Proton acceptor" evidence="1">
    <location>
        <position position="39"/>
    </location>
</feature>
<feature type="active site" description="Proton donor" evidence="1">
    <location>
        <position position="179"/>
    </location>
</feature>
<feature type="binding site" evidence="1">
    <location>
        <position position="12"/>
    </location>
    <ligand>
        <name>substrate</name>
    </ligand>
</feature>
<feature type="binding site" evidence="4 6">
    <location>
        <position position="37"/>
    </location>
    <ligand>
        <name>a divalent metal cation</name>
        <dbReference type="ChEBI" id="CHEBI:60240"/>
    </ligand>
</feature>
<feature type="binding site" evidence="4 6">
    <location>
        <position position="39"/>
    </location>
    <ligand>
        <name>a divalent metal cation</name>
        <dbReference type="ChEBI" id="CHEBI:60240"/>
    </ligand>
</feature>
<feature type="binding site" evidence="4 6">
    <location>
        <position position="70"/>
    </location>
    <ligand>
        <name>a divalent metal cation</name>
        <dbReference type="ChEBI" id="CHEBI:60240"/>
    </ligand>
</feature>
<feature type="binding site" evidence="1">
    <location>
        <position position="70"/>
    </location>
    <ligand>
        <name>substrate</name>
    </ligand>
</feature>
<feature type="binding site" evidence="1">
    <location>
        <begin position="150"/>
        <end position="153"/>
    </location>
    <ligand>
        <name>substrate</name>
    </ligand>
</feature>
<feature type="binding site" evidence="1">
    <location>
        <begin position="179"/>
        <end position="181"/>
    </location>
    <ligand>
        <name>substrate</name>
    </ligand>
</feature>
<feature type="binding site" evidence="4 6">
    <location>
        <position position="179"/>
    </location>
    <ligand>
        <name>a divalent metal cation</name>
        <dbReference type="ChEBI" id="CHEBI:60240"/>
    </ligand>
</feature>
<feature type="binding site" evidence="1">
    <location>
        <begin position="201"/>
        <end position="202"/>
    </location>
    <ligand>
        <name>substrate</name>
    </ligand>
</feature>
<feature type="sequence conflict" description="In Ref. 2; AC108753." evidence="5" ref="2">
    <original>DG</original>
    <variation>GR</variation>
    <location>
        <begin position="42"/>
        <end position="43"/>
    </location>
</feature>
<feature type="strand" evidence="7">
    <location>
        <begin position="8"/>
        <end position="12"/>
    </location>
</feature>
<feature type="helix" evidence="7">
    <location>
        <begin position="13"/>
        <end position="15"/>
    </location>
</feature>
<feature type="helix" evidence="7">
    <location>
        <begin position="18"/>
        <end position="20"/>
    </location>
</feature>
<feature type="helix" evidence="7">
    <location>
        <begin position="21"/>
        <end position="30"/>
    </location>
</feature>
<feature type="strand" evidence="7">
    <location>
        <begin position="34"/>
        <end position="47"/>
    </location>
</feature>
<feature type="helix" evidence="7">
    <location>
        <begin position="53"/>
        <end position="60"/>
    </location>
</feature>
<feature type="strand" evidence="7">
    <location>
        <begin position="65"/>
        <end position="74"/>
    </location>
</feature>
<feature type="helix" evidence="7">
    <location>
        <begin position="76"/>
        <end position="79"/>
    </location>
</feature>
<feature type="helix" evidence="7">
    <location>
        <begin position="80"/>
        <end position="86"/>
    </location>
</feature>
<feature type="strand" evidence="7">
    <location>
        <begin position="89"/>
        <end position="94"/>
    </location>
</feature>
<feature type="helix" evidence="7">
    <location>
        <begin position="95"/>
        <end position="97"/>
    </location>
</feature>
<feature type="turn" evidence="7">
    <location>
        <begin position="99"/>
        <end position="101"/>
    </location>
</feature>
<feature type="helix" evidence="7">
    <location>
        <begin position="102"/>
        <end position="111"/>
    </location>
</feature>
<feature type="strand" evidence="7">
    <location>
        <begin position="115"/>
        <end position="120"/>
    </location>
</feature>
<feature type="helix" evidence="7">
    <location>
        <begin position="126"/>
        <end position="129"/>
    </location>
</feature>
<feature type="helix" evidence="7">
    <location>
        <begin position="130"/>
        <end position="134"/>
    </location>
</feature>
<feature type="strand" evidence="7">
    <location>
        <begin position="135"/>
        <end position="137"/>
    </location>
</feature>
<feature type="strand" evidence="7">
    <location>
        <begin position="140"/>
        <end position="147"/>
    </location>
</feature>
<feature type="strand" evidence="8">
    <location>
        <begin position="149"/>
        <end position="151"/>
    </location>
</feature>
<feature type="helix" evidence="7">
    <location>
        <begin position="158"/>
        <end position="160"/>
    </location>
</feature>
<feature type="helix" evidence="7">
    <location>
        <begin position="161"/>
        <end position="170"/>
    </location>
</feature>
<feature type="strand" evidence="7">
    <location>
        <begin position="174"/>
        <end position="181"/>
    </location>
</feature>
<feature type="turn" evidence="7">
    <location>
        <begin position="184"/>
        <end position="186"/>
    </location>
</feature>
<feature type="helix" evidence="7">
    <location>
        <begin position="187"/>
        <end position="193"/>
    </location>
</feature>
<feature type="strand" evidence="7">
    <location>
        <begin position="197"/>
        <end position="201"/>
    </location>
</feature>
<feature type="helix" evidence="7">
    <location>
        <begin position="202"/>
        <end position="205"/>
    </location>
</feature>
<feature type="helix" evidence="7">
    <location>
        <begin position="210"/>
        <end position="223"/>
    </location>
</feature>
<proteinExistence type="evidence at protein level"/>
<reference key="1">
    <citation type="journal article" date="2000" name="J. Biol. Chem.">
        <title>Identification, cloning, and properties of cytosolic D-ribulose-5-phosphate 3-epimerase from higher plants.</title>
        <authorList>
            <person name="Kopriva S."/>
            <person name="Koprivova A."/>
            <person name="Suess K.-H."/>
        </authorList>
    </citation>
    <scope>NUCLEOTIDE SEQUENCE [MRNA]</scope>
    <scope>SUBCELLULAR LOCATION</scope>
    <scope>SUBUNIT</scope>
    <scope>TISSUE SPECIFICITY</scope>
    <scope>BIOPHYSICOCHEMICAL PROPERTIES</scope>
    <source>
        <strain>cv. Nipponbare</strain>
    </source>
</reference>
<reference key="2">
    <citation type="journal article" date="2005" name="Nature">
        <title>The map-based sequence of the rice genome.</title>
        <authorList>
            <consortium name="International rice genome sequencing project (IRGSP)"/>
        </authorList>
    </citation>
    <scope>NUCLEOTIDE SEQUENCE [LARGE SCALE GENOMIC DNA]</scope>
    <source>
        <strain>cv. Nipponbare</strain>
    </source>
</reference>
<reference key="3">
    <citation type="journal article" date="2008" name="Nucleic Acids Res.">
        <title>The rice annotation project database (RAP-DB): 2008 update.</title>
        <authorList>
            <consortium name="The rice annotation project (RAP)"/>
        </authorList>
    </citation>
    <scope>GENOME REANNOTATION</scope>
    <source>
        <strain>cv. Nipponbare</strain>
    </source>
</reference>
<reference key="4">
    <citation type="journal article" date="2013" name="Rice">
        <title>Improvement of the Oryza sativa Nipponbare reference genome using next generation sequence and optical map data.</title>
        <authorList>
            <person name="Kawahara Y."/>
            <person name="de la Bastide M."/>
            <person name="Hamilton J.P."/>
            <person name="Kanamori H."/>
            <person name="McCombie W.R."/>
            <person name="Ouyang S."/>
            <person name="Schwartz D.C."/>
            <person name="Tanaka T."/>
            <person name="Wu J."/>
            <person name="Zhou S."/>
            <person name="Childs K.L."/>
            <person name="Davidson R.M."/>
            <person name="Lin H."/>
            <person name="Quesada-Ocampo L."/>
            <person name="Vaillancourt B."/>
            <person name="Sakai H."/>
            <person name="Lee S.S."/>
            <person name="Kim J."/>
            <person name="Numa H."/>
            <person name="Itoh T."/>
            <person name="Buell C.R."/>
            <person name="Matsumoto T."/>
        </authorList>
    </citation>
    <scope>GENOME REANNOTATION</scope>
    <source>
        <strain>cv. Nipponbare</strain>
    </source>
</reference>
<reference key="5">
    <citation type="journal article" date="2003" name="Science">
        <title>Collection, mapping, and annotation of over 28,000 cDNA clones from japonica rice.</title>
        <authorList>
            <consortium name="The rice full-length cDNA consortium"/>
        </authorList>
    </citation>
    <scope>NUCLEOTIDE SEQUENCE [LARGE SCALE MRNA]</scope>
    <source>
        <strain>cv. Nipponbare</strain>
    </source>
</reference>
<reference key="6">
    <citation type="journal article" date="2003" name="J. Mol. Biol.">
        <title>Structure and catalytic mechanism of the cytosolic D-ribulose-5-phosphate 3-epimerase from rice.</title>
        <authorList>
            <person name="Jelakovic S."/>
            <person name="Kopriva S."/>
            <person name="Suess K.-H."/>
            <person name="Schulz G.E."/>
        </authorList>
    </citation>
    <scope>X-RAY CRYSTALLOGRAPHY (1.87 ANGSTROMS) IN COMPLEX WITH ZINC</scope>
    <scope>COFACTOR</scope>
    <scope>ACTIVE SITE</scope>
    <scope>SUBUNIT</scope>
</reference>
<evidence type="ECO:0000250" key="1">
    <source>
        <dbReference type="UniProtKB" id="P32719"/>
    </source>
</evidence>
<evidence type="ECO:0000250" key="2">
    <source>
        <dbReference type="UniProtKB" id="Q96AT9"/>
    </source>
</evidence>
<evidence type="ECO:0000269" key="3">
    <source>
    </source>
</evidence>
<evidence type="ECO:0000269" key="4">
    <source>
    </source>
</evidence>
<evidence type="ECO:0000305" key="5"/>
<evidence type="ECO:0007744" key="6">
    <source>
        <dbReference type="PDB" id="1H1Z"/>
    </source>
</evidence>
<evidence type="ECO:0007829" key="7">
    <source>
        <dbReference type="PDB" id="1H1Y"/>
    </source>
</evidence>
<evidence type="ECO:0007829" key="8">
    <source>
        <dbReference type="PDB" id="1H1Z"/>
    </source>
</evidence>
<accession>Q9SE42</accession>
<accession>B7EGE3</accession>
<accession>Q0J0L5</accession>
<dbReference type="EC" id="5.1.3.1" evidence="2"/>
<dbReference type="EMBL" id="AF189365">
    <property type="protein sequence ID" value="AAF01048.1"/>
    <property type="molecule type" value="mRNA"/>
</dbReference>
<dbReference type="EMBL" id="AC108753">
    <property type="status" value="NOT_ANNOTATED_CDS"/>
    <property type="molecule type" value="Genomic_DNA"/>
</dbReference>
<dbReference type="EMBL" id="AP008215">
    <property type="protein sequence ID" value="BAF25518.2"/>
    <property type="molecule type" value="Genomic_DNA"/>
</dbReference>
<dbReference type="EMBL" id="AP014965">
    <property type="protein sequence ID" value="BAT08853.1"/>
    <property type="molecule type" value="Genomic_DNA"/>
</dbReference>
<dbReference type="EMBL" id="AK069451">
    <property type="protein sequence ID" value="BAG91440.1"/>
    <property type="molecule type" value="mRNA"/>
</dbReference>
<dbReference type="RefSeq" id="XP_015611665.1">
    <property type="nucleotide sequence ID" value="XM_015756179.1"/>
</dbReference>
<dbReference type="PDB" id="1H1Y">
    <property type="method" value="X-ray"/>
    <property type="resolution" value="1.87 A"/>
    <property type="chains" value="A/B=1-228"/>
</dbReference>
<dbReference type="PDB" id="1H1Z">
    <property type="method" value="X-ray"/>
    <property type="resolution" value="3.40 A"/>
    <property type="chains" value="A/B=1-228"/>
</dbReference>
<dbReference type="PDBsum" id="1H1Y"/>
<dbReference type="PDBsum" id="1H1Z"/>
<dbReference type="SMR" id="Q9SE42"/>
<dbReference type="FunCoup" id="Q9SE42">
    <property type="interactions" value="2127"/>
</dbReference>
<dbReference type="STRING" id="39947.Q9SE42"/>
<dbReference type="PaxDb" id="39947-Q9SE42"/>
<dbReference type="EnsemblPlants" id="Os09t0505700-02">
    <property type="protein sequence ID" value="Os09t0505700-02"/>
    <property type="gene ID" value="Os09g0505700"/>
</dbReference>
<dbReference type="Gramene" id="Os09t0505700-02">
    <property type="protein sequence ID" value="Os09t0505700-02"/>
    <property type="gene ID" value="Os09g0505700"/>
</dbReference>
<dbReference type="KEGG" id="dosa:Os09g0505700"/>
<dbReference type="eggNOG" id="KOG3111">
    <property type="taxonomic scope" value="Eukaryota"/>
</dbReference>
<dbReference type="HOGENOM" id="CLU_054856_0_1_1"/>
<dbReference type="InParanoid" id="Q9SE42"/>
<dbReference type="OMA" id="CHLMIED"/>
<dbReference type="OrthoDB" id="1927044at2759"/>
<dbReference type="BRENDA" id="5.1.3.1">
    <property type="organism ID" value="4460"/>
</dbReference>
<dbReference type="PlantReactome" id="R-OSA-1119519">
    <property type="pathway name" value="Calvin cycle"/>
</dbReference>
<dbReference type="SABIO-RK" id="Q9SE42"/>
<dbReference type="UniPathway" id="UPA00115">
    <property type="reaction ID" value="UER00411"/>
</dbReference>
<dbReference type="EvolutionaryTrace" id="Q9SE42"/>
<dbReference type="Proteomes" id="UP000000763">
    <property type="component" value="Chromosome 9"/>
</dbReference>
<dbReference type="Proteomes" id="UP000059680">
    <property type="component" value="Chromosome 9"/>
</dbReference>
<dbReference type="ExpressionAtlas" id="Q9SE42">
    <property type="expression patterns" value="baseline and differential"/>
</dbReference>
<dbReference type="GO" id="GO:0005829">
    <property type="term" value="C:cytosol"/>
    <property type="evidence" value="ECO:0000318"/>
    <property type="project" value="GO_Central"/>
</dbReference>
<dbReference type="GO" id="GO:0004750">
    <property type="term" value="F:D-ribulose-phosphate 3-epimerase activity"/>
    <property type="evidence" value="ECO:0000318"/>
    <property type="project" value="GO_Central"/>
</dbReference>
<dbReference type="GO" id="GO:0046872">
    <property type="term" value="F:metal ion binding"/>
    <property type="evidence" value="ECO:0000318"/>
    <property type="project" value="GO_Central"/>
</dbReference>
<dbReference type="GO" id="GO:0005975">
    <property type="term" value="P:carbohydrate metabolic process"/>
    <property type="evidence" value="ECO:0000318"/>
    <property type="project" value="GO_Central"/>
</dbReference>
<dbReference type="GO" id="GO:0009052">
    <property type="term" value="P:pentose-phosphate shunt, non-oxidative branch"/>
    <property type="evidence" value="ECO:0000318"/>
    <property type="project" value="GO_Central"/>
</dbReference>
<dbReference type="CDD" id="cd00429">
    <property type="entry name" value="RPE"/>
    <property type="match status" value="1"/>
</dbReference>
<dbReference type="FunFam" id="3.20.20.70:FF:000181">
    <property type="entry name" value="Ribulose-phosphate 3-epimerase"/>
    <property type="match status" value="1"/>
</dbReference>
<dbReference type="Gene3D" id="3.20.20.70">
    <property type="entry name" value="Aldolase class I"/>
    <property type="match status" value="1"/>
</dbReference>
<dbReference type="HAMAP" id="MF_02227">
    <property type="entry name" value="RPE"/>
    <property type="match status" value="1"/>
</dbReference>
<dbReference type="InterPro" id="IPR013785">
    <property type="entry name" value="Aldolase_TIM"/>
</dbReference>
<dbReference type="InterPro" id="IPR026019">
    <property type="entry name" value="Ribul_P_3_epim"/>
</dbReference>
<dbReference type="InterPro" id="IPR000056">
    <property type="entry name" value="Ribul_P_3_epim-like"/>
</dbReference>
<dbReference type="InterPro" id="IPR011060">
    <property type="entry name" value="RibuloseP-bd_barrel"/>
</dbReference>
<dbReference type="NCBIfam" id="NF004076">
    <property type="entry name" value="PRK05581.1-4"/>
    <property type="match status" value="1"/>
</dbReference>
<dbReference type="NCBIfam" id="TIGR01163">
    <property type="entry name" value="rpe"/>
    <property type="match status" value="1"/>
</dbReference>
<dbReference type="PANTHER" id="PTHR11749">
    <property type="entry name" value="RIBULOSE-5-PHOSPHATE-3-EPIMERASE"/>
    <property type="match status" value="1"/>
</dbReference>
<dbReference type="Pfam" id="PF00834">
    <property type="entry name" value="Ribul_P_3_epim"/>
    <property type="match status" value="1"/>
</dbReference>
<dbReference type="PIRSF" id="PIRSF001461">
    <property type="entry name" value="RPE"/>
    <property type="match status" value="1"/>
</dbReference>
<dbReference type="SUPFAM" id="SSF51366">
    <property type="entry name" value="Ribulose-phoshate binding barrel"/>
    <property type="match status" value="1"/>
</dbReference>
<dbReference type="PROSITE" id="PS01085">
    <property type="entry name" value="RIBUL_P_3_EPIMER_1"/>
    <property type="match status" value="1"/>
</dbReference>
<dbReference type="PROSITE" id="PS01086">
    <property type="entry name" value="RIBUL_P_3_EPIMER_2"/>
    <property type="match status" value="1"/>
</dbReference>
<keyword id="KW-0002">3D-structure</keyword>
<keyword id="KW-0119">Carbohydrate metabolism</keyword>
<keyword id="KW-0170">Cobalt</keyword>
<keyword id="KW-0963">Cytoplasm</keyword>
<keyword id="KW-0408">Iron</keyword>
<keyword id="KW-0413">Isomerase</keyword>
<keyword id="KW-0464">Manganese</keyword>
<keyword id="KW-0479">Metal-binding</keyword>
<keyword id="KW-0570">Pentose shunt</keyword>
<keyword id="KW-1185">Reference proteome</keyword>
<keyword id="KW-0862">Zinc</keyword>
<name>RPE1_ORYSJ</name>
<protein>
    <recommendedName>
        <fullName>Ribulose-phosphate 3-epimerase, cytoplasmic isoform</fullName>
        <ecNumber evidence="2">5.1.3.1</ecNumber>
    </recommendedName>
    <alternativeName>
        <fullName>Cyt-RPEase</fullName>
    </alternativeName>
    <alternativeName>
        <fullName>Pentose-5-phosphate 3-epimerase</fullName>
        <shortName>PPE</shortName>
    </alternativeName>
    <alternativeName>
        <fullName>RPEcyt</fullName>
    </alternativeName>
    <alternativeName>
        <fullName>Ribulose-5-phosphate-epimerase</fullName>
    </alternativeName>
</protein>